<comment type="function">
    <text evidence="1">DNA-dependent RNA polymerase catalyzes the transcription of DNA into RNA using the four ribonucleoside triphosphates as substrates.</text>
</comment>
<comment type="catalytic activity">
    <reaction evidence="1">
        <text>RNA(n) + a ribonucleoside 5'-triphosphate = RNA(n+1) + diphosphate</text>
        <dbReference type="Rhea" id="RHEA:21248"/>
        <dbReference type="Rhea" id="RHEA-COMP:14527"/>
        <dbReference type="Rhea" id="RHEA-COMP:17342"/>
        <dbReference type="ChEBI" id="CHEBI:33019"/>
        <dbReference type="ChEBI" id="CHEBI:61557"/>
        <dbReference type="ChEBI" id="CHEBI:140395"/>
        <dbReference type="EC" id="2.7.7.6"/>
    </reaction>
</comment>
<comment type="cofactor">
    <cofactor evidence="1">
        <name>Zn(2+)</name>
        <dbReference type="ChEBI" id="CHEBI:29105"/>
    </cofactor>
    <text evidence="1">Binds 1 Zn(2+) ion per subunit.</text>
</comment>
<comment type="subunit">
    <text evidence="1">In plastids the minimal PEP RNA polymerase catalytic core is composed of four subunits: alpha, beta, beta', and beta''. When a (nuclear-encoded) sigma factor is associated with the core the holoenzyme is formed, which can initiate transcription.</text>
</comment>
<comment type="subcellular location">
    <subcellularLocation>
        <location evidence="1">Plastid</location>
        <location evidence="1">Chloroplast</location>
    </subcellularLocation>
</comment>
<comment type="similarity">
    <text evidence="1">Belongs to the RNA polymerase beta' chain family. RpoC2 subfamily.</text>
</comment>
<keyword id="KW-0150">Chloroplast</keyword>
<keyword id="KW-0240">DNA-directed RNA polymerase</keyword>
<keyword id="KW-0479">Metal-binding</keyword>
<keyword id="KW-0548">Nucleotidyltransferase</keyword>
<keyword id="KW-0934">Plastid</keyword>
<keyword id="KW-0804">Transcription</keyword>
<keyword id="KW-0808">Transferase</keyword>
<keyword id="KW-0862">Zinc</keyword>
<dbReference type="EC" id="2.7.7.6" evidence="1"/>
<dbReference type="EMBL" id="AY582139">
    <property type="protein sequence ID" value="AAT98499.1"/>
    <property type="molecule type" value="Genomic_DNA"/>
</dbReference>
<dbReference type="RefSeq" id="YP_086956.2">
    <property type="nucleotide sequence ID" value="NC_006290.1"/>
</dbReference>
<dbReference type="SMR" id="Q68S16"/>
<dbReference type="GeneID" id="3021491"/>
<dbReference type="GO" id="GO:0009507">
    <property type="term" value="C:chloroplast"/>
    <property type="evidence" value="ECO:0007669"/>
    <property type="project" value="UniProtKB-SubCell"/>
</dbReference>
<dbReference type="GO" id="GO:0000428">
    <property type="term" value="C:DNA-directed RNA polymerase complex"/>
    <property type="evidence" value="ECO:0007669"/>
    <property type="project" value="UniProtKB-KW"/>
</dbReference>
<dbReference type="GO" id="GO:0005739">
    <property type="term" value="C:mitochondrion"/>
    <property type="evidence" value="ECO:0007669"/>
    <property type="project" value="GOC"/>
</dbReference>
<dbReference type="GO" id="GO:0003677">
    <property type="term" value="F:DNA binding"/>
    <property type="evidence" value="ECO:0007669"/>
    <property type="project" value="UniProtKB-UniRule"/>
</dbReference>
<dbReference type="GO" id="GO:0003899">
    <property type="term" value="F:DNA-directed RNA polymerase activity"/>
    <property type="evidence" value="ECO:0007669"/>
    <property type="project" value="UniProtKB-UniRule"/>
</dbReference>
<dbReference type="GO" id="GO:0008270">
    <property type="term" value="F:zinc ion binding"/>
    <property type="evidence" value="ECO:0007669"/>
    <property type="project" value="UniProtKB-UniRule"/>
</dbReference>
<dbReference type="GO" id="GO:0006351">
    <property type="term" value="P:DNA-templated transcription"/>
    <property type="evidence" value="ECO:0007669"/>
    <property type="project" value="UniProtKB-UniRule"/>
</dbReference>
<dbReference type="CDD" id="cd02655">
    <property type="entry name" value="RNAP_beta'_C"/>
    <property type="match status" value="1"/>
</dbReference>
<dbReference type="FunFam" id="1.10.132.30:FF:000002">
    <property type="entry name" value="DNA-directed RNA polymerase subunit beta"/>
    <property type="match status" value="1"/>
</dbReference>
<dbReference type="FunFam" id="1.10.1790.20:FF:000002">
    <property type="entry name" value="DNA-directed RNA polymerase subunit beta"/>
    <property type="match status" value="1"/>
</dbReference>
<dbReference type="Gene3D" id="1.10.132.30">
    <property type="match status" value="1"/>
</dbReference>
<dbReference type="Gene3D" id="1.10.150.390">
    <property type="match status" value="1"/>
</dbReference>
<dbReference type="Gene3D" id="1.10.1790.20">
    <property type="match status" value="1"/>
</dbReference>
<dbReference type="Gene3D" id="1.10.274.100">
    <property type="entry name" value="RNA polymerase Rpb1, domain 3"/>
    <property type="match status" value="1"/>
</dbReference>
<dbReference type="HAMAP" id="MF_01324">
    <property type="entry name" value="RNApol_bact_RpoC2"/>
    <property type="match status" value="1"/>
</dbReference>
<dbReference type="InterPro" id="IPR012756">
    <property type="entry name" value="DNA-dir_RpoC2_beta_pp"/>
</dbReference>
<dbReference type="InterPro" id="IPR050254">
    <property type="entry name" value="RNA_pol_beta''_euk"/>
</dbReference>
<dbReference type="InterPro" id="IPR042102">
    <property type="entry name" value="RNA_pol_Rpb1_3_sf"/>
</dbReference>
<dbReference type="InterPro" id="IPR007083">
    <property type="entry name" value="RNA_pol_Rpb1_4"/>
</dbReference>
<dbReference type="InterPro" id="IPR007081">
    <property type="entry name" value="RNA_pol_Rpb1_5"/>
</dbReference>
<dbReference type="InterPro" id="IPR038120">
    <property type="entry name" value="Rpb1_funnel_sf"/>
</dbReference>
<dbReference type="NCBIfam" id="TIGR02388">
    <property type="entry name" value="rpoC2_cyan"/>
    <property type="match status" value="1"/>
</dbReference>
<dbReference type="PANTHER" id="PTHR34995">
    <property type="entry name" value="DNA-DIRECTED RNA POLYMERASE SUBUNIT BETA"/>
    <property type="match status" value="1"/>
</dbReference>
<dbReference type="PANTHER" id="PTHR34995:SF1">
    <property type="entry name" value="DNA-DIRECTED RNA POLYMERASE SUBUNIT BETA"/>
    <property type="match status" value="1"/>
</dbReference>
<dbReference type="Pfam" id="PF05000">
    <property type="entry name" value="RNA_pol_Rpb1_4"/>
    <property type="match status" value="1"/>
</dbReference>
<dbReference type="Pfam" id="PF04998">
    <property type="entry name" value="RNA_pol_Rpb1_5"/>
    <property type="match status" value="2"/>
</dbReference>
<dbReference type="SUPFAM" id="SSF64484">
    <property type="entry name" value="beta and beta-prime subunits of DNA dependent RNA-polymerase"/>
    <property type="match status" value="1"/>
</dbReference>
<sequence>MEVLMAERANLVFHNKVIDGTAMKRLISRLIEHFGMAYTSHILDQVKTLGFQQATATSISLGIDDLLTIPSKRWLVQDAEQQSLILEKQHHYGNVHAVEKLRQSIEIWYATSEFLRQEMKPNFRMTDPFNPVHIMSFSGARGNASQVHQLVGMRGLMADPQGQMIDLPIQSNLREGLSLTEYIISCYGARKGVVDTAVRTSDAGYLTRRLVEVVQHIVVRRKDCGTVRGISVSPRNGMMPERVFIQTLIGRVLADDIYLGPRCIATRNQDIGSGLVNRFITFRAQPIYIRTPFTCRSTSWICRLCYGRSPTHGDLAELGEAVGIIAGQSIGEPGTQLTLRTFHTGGVFTGGTAEHVRAPSNGKIKFNEDLVHPTRTRHGHPAFLCSIDLYVTIESEDIIHNVNIPPKSFLLVQNDQYVESEQVIAEIRAGTSTLNFKEKVRKHIYSDSEGEMHWNTDVYHAPAFTYGNVHLLPKTSHLWILLGEPCRSDLVALSIHKDQDQMNAHSLSVKRRYISNLSVTNDQARHKFFSSDFSGKKEDRITDYSELNRIGHCNLPYLAILHANSDLLAKRRRNRFIIPLQSIQEHENELMPSSGISIEIPIHGIFRKKSIIAYFDDPRYRRKSSGITKYGTIEVHSIVKKEDLIEYRGVKEFRPKYQMKVDRFFFIPEEVHILPGSSSIMVRNNSIIGVDTQITLTTRSRVGGLVRVERKKKRIELKIFSGDIHFPGETDKISRHSGVLIPPGTGKTNSKESKKWKNWIYVQRITPTKKKYFVLVRPVVTYEITDGINLATLFFPDLLQERDNVQLRVVNYILYGTGKPIRGFYDTSIQLVRTCLVLNWVQDKKSSSIEEARTSFVEIRINSLIRDFLKIDLAKSPILYTGKRKDPSGSGLISENGSDRTNINPFSSSFFYSKARIKESLNQNQGTIHTLLNRNKECQSLIILSSSNCFRMGPFNDVKYHNVIKESIQKDPLIQIRNSLGPLGTALQIANFYSFSHLITYNQILVTNYLQLDNLKQSFQVLKYYLMDENGKIYNPDRCCNIILNPFNLNWFFLHHNYCEETSTTMSLGQFICENVCIAKNGPHLKPGQVLIVQVDSVVIRSAKPYLATPGATVHGHYGEILYEGDTLVTFIYEKSRSGDITQGLPKVEQVLEVRSIDSISMNLEKRVEGWNECITRNLGIPWGFLIGAELTIVQSRISLVNKIQKVYRSQGVQIHNRHIEIIVRQITSKVLVSEDGMSNVFLPGEFIGLLRAERMGRALEEAICYQAVLLGITKASLNTQSFISEASFQETARVLAKAALRGRIDWLKGLKENVVLGGMIPVGTGFKGLVPPSRQHKNIPLETKNKNLFEGEMRDILFHHRKFFDSCLSKNFHDTPEQSFIGFNDS</sequence>
<accession>Q68S16</accession>
<gene>
    <name evidence="1" type="primary">rpoC2</name>
    <name type="ORF">PSC0178</name>
</gene>
<proteinExistence type="inferred from homology"/>
<organism>
    <name type="scientific">Panax ginseng</name>
    <name type="common">Korean ginseng</name>
    <dbReference type="NCBI Taxonomy" id="4054"/>
    <lineage>
        <taxon>Eukaryota</taxon>
        <taxon>Viridiplantae</taxon>
        <taxon>Streptophyta</taxon>
        <taxon>Embryophyta</taxon>
        <taxon>Tracheophyta</taxon>
        <taxon>Spermatophyta</taxon>
        <taxon>Magnoliopsida</taxon>
        <taxon>eudicotyledons</taxon>
        <taxon>Gunneridae</taxon>
        <taxon>Pentapetalae</taxon>
        <taxon>asterids</taxon>
        <taxon>campanulids</taxon>
        <taxon>Apiales</taxon>
        <taxon>Araliaceae</taxon>
        <taxon>Panax</taxon>
    </lineage>
</organism>
<protein>
    <recommendedName>
        <fullName evidence="1">DNA-directed RNA polymerase subunit beta''</fullName>
        <ecNumber evidence="1">2.7.7.6</ecNumber>
    </recommendedName>
    <alternativeName>
        <fullName evidence="1">PEP</fullName>
    </alternativeName>
    <alternativeName>
        <fullName evidence="1">Plastid-encoded RNA polymerase subunit beta''</fullName>
        <shortName evidence="1">RNA polymerase subunit beta''</shortName>
    </alternativeName>
</protein>
<reference key="1">
    <citation type="journal article" date="2004" name="DNA Res.">
        <title>Complete chloroplast genome sequence from Korea ginseng (Panax schinseng Nees) and comparative analysis of sequence evolution among 17 vascular plants.</title>
        <authorList>
            <person name="Kim K.-J."/>
            <person name="Lee H.-L."/>
        </authorList>
    </citation>
    <scope>NUCLEOTIDE SEQUENCE [LARGE SCALE GENOMIC DNA]</scope>
</reference>
<feature type="chain" id="PRO_0000067938" description="DNA-directed RNA polymerase subunit beta''">
    <location>
        <begin position="1"/>
        <end position="1387"/>
    </location>
</feature>
<feature type="binding site" evidence="1">
    <location>
        <position position="224"/>
    </location>
    <ligand>
        <name>Zn(2+)</name>
        <dbReference type="ChEBI" id="CHEBI:29105"/>
    </ligand>
</feature>
<feature type="binding site" evidence="1">
    <location>
        <position position="295"/>
    </location>
    <ligand>
        <name>Zn(2+)</name>
        <dbReference type="ChEBI" id="CHEBI:29105"/>
    </ligand>
</feature>
<feature type="binding site" evidence="1">
    <location>
        <position position="302"/>
    </location>
    <ligand>
        <name>Zn(2+)</name>
        <dbReference type="ChEBI" id="CHEBI:29105"/>
    </ligand>
</feature>
<feature type="binding site" evidence="1">
    <location>
        <position position="305"/>
    </location>
    <ligand>
        <name>Zn(2+)</name>
        <dbReference type="ChEBI" id="CHEBI:29105"/>
    </ligand>
</feature>
<evidence type="ECO:0000255" key="1">
    <source>
        <dbReference type="HAMAP-Rule" id="MF_01324"/>
    </source>
</evidence>
<name>RPOC2_PANGI</name>
<geneLocation type="chloroplast"/>